<organism>
    <name type="scientific">Plasmodium yoelii yoelii</name>
    <dbReference type="NCBI Taxonomy" id="73239"/>
    <lineage>
        <taxon>Eukaryota</taxon>
        <taxon>Sar</taxon>
        <taxon>Alveolata</taxon>
        <taxon>Apicomplexa</taxon>
        <taxon>Aconoidasida</taxon>
        <taxon>Haemosporida</taxon>
        <taxon>Plasmodiidae</taxon>
        <taxon>Plasmodium</taxon>
        <taxon>Plasmodium (Vinckeia)</taxon>
    </lineage>
</organism>
<evidence type="ECO:0000250" key="1">
    <source>
        <dbReference type="UniProtKB" id="P04181"/>
    </source>
</evidence>
<evidence type="ECO:0000250" key="2">
    <source>
        <dbReference type="UniProtKB" id="Q6LFH8"/>
    </source>
</evidence>
<evidence type="ECO:0000305" key="3"/>
<evidence type="ECO:0007744" key="4">
    <source>
        <dbReference type="PDB" id="1Z7D"/>
    </source>
</evidence>
<evidence type="ECO:0007829" key="5">
    <source>
        <dbReference type="PDB" id="1Z7D"/>
    </source>
</evidence>
<proteinExistence type="evidence at protein level"/>
<feature type="chain" id="PRO_0000233396" description="Ornithine aminotransferase">
    <location>
        <begin position="1"/>
        <end position="414"/>
    </location>
</feature>
<feature type="modified residue" description="N6-(pyridoxal phosphate)lysine" evidence="1">
    <location>
        <position position="262"/>
    </location>
</feature>
<feature type="disulfide bond" description="Reversible" evidence="2">
    <location>
        <begin position="154"/>
        <end position="163"/>
    </location>
</feature>
<feature type="helix" evidence="5">
    <location>
        <begin position="10"/>
        <end position="20"/>
    </location>
</feature>
<feature type="strand" evidence="5">
    <location>
        <begin position="28"/>
        <end position="37"/>
    </location>
</feature>
<feature type="strand" evidence="5">
    <location>
        <begin position="39"/>
        <end position="42"/>
    </location>
</feature>
<feature type="strand" evidence="5">
    <location>
        <begin position="47"/>
        <end position="52"/>
    </location>
</feature>
<feature type="helix" evidence="5">
    <location>
        <begin position="53"/>
        <end position="56"/>
    </location>
</feature>
<feature type="turn" evidence="5">
    <location>
        <begin position="57"/>
        <end position="60"/>
    </location>
</feature>
<feature type="helix" evidence="5">
    <location>
        <begin position="65"/>
        <end position="75"/>
    </location>
</feature>
<feature type="strand" evidence="5">
    <location>
        <begin position="85"/>
        <end position="87"/>
    </location>
</feature>
<feature type="helix" evidence="5">
    <location>
        <begin position="88"/>
        <end position="101"/>
    </location>
</feature>
<feature type="strand" evidence="5">
    <location>
        <begin position="104"/>
        <end position="111"/>
    </location>
</feature>
<feature type="helix" evidence="5">
    <location>
        <begin position="112"/>
        <end position="129"/>
    </location>
</feature>
<feature type="strand" evidence="5">
    <location>
        <begin position="139"/>
        <end position="143"/>
    </location>
</feature>
<feature type="strand" evidence="5">
    <location>
        <begin position="174"/>
        <end position="177"/>
    </location>
</feature>
<feature type="helix" evidence="5">
    <location>
        <begin position="182"/>
        <end position="189"/>
    </location>
</feature>
<feature type="strand" evidence="5">
    <location>
        <begin position="194"/>
        <end position="199"/>
    </location>
</feature>
<feature type="strand" evidence="5">
    <location>
        <begin position="201"/>
        <end position="204"/>
    </location>
</feature>
<feature type="turn" evidence="5">
    <location>
        <begin position="205"/>
        <end position="207"/>
    </location>
</feature>
<feature type="helix" evidence="5">
    <location>
        <begin position="215"/>
        <end position="225"/>
    </location>
</feature>
<feature type="strand" evidence="5">
    <location>
        <begin position="229"/>
        <end position="233"/>
    </location>
</feature>
<feature type="turn" evidence="5">
    <location>
        <begin position="235"/>
        <end position="242"/>
    </location>
</feature>
<feature type="strand" evidence="5">
    <location>
        <begin position="243"/>
        <end position="246"/>
    </location>
</feature>
<feature type="helix" evidence="5">
    <location>
        <begin position="247"/>
        <end position="251"/>
    </location>
</feature>
<feature type="strand" evidence="5">
    <location>
        <begin position="256"/>
        <end position="260"/>
    </location>
</feature>
<feature type="helix" evidence="5">
    <location>
        <begin position="262"/>
        <end position="265"/>
    </location>
</feature>
<feature type="strand" evidence="5">
    <location>
        <begin position="272"/>
        <end position="276"/>
    </location>
</feature>
<feature type="helix" evidence="5">
    <location>
        <begin position="278"/>
        <end position="281"/>
    </location>
</feature>
<feature type="turn" evidence="5">
    <location>
        <begin position="292"/>
        <end position="295"/>
    </location>
</feature>
<feature type="helix" evidence="5">
    <location>
        <begin position="297"/>
        <end position="312"/>
    </location>
</feature>
<feature type="helix" evidence="5">
    <location>
        <begin position="315"/>
        <end position="334"/>
    </location>
</feature>
<feature type="strand" evidence="5">
    <location>
        <begin position="340"/>
        <end position="346"/>
    </location>
</feature>
<feature type="strand" evidence="5">
    <location>
        <begin position="349"/>
        <end position="354"/>
    </location>
</feature>
<feature type="turn" evidence="5">
    <location>
        <begin position="356"/>
        <end position="358"/>
    </location>
</feature>
<feature type="helix" evidence="5">
    <location>
        <begin position="361"/>
        <end position="370"/>
    </location>
</feature>
<feature type="turn" evidence="5">
    <location>
        <begin position="379"/>
        <end position="381"/>
    </location>
</feature>
<feature type="strand" evidence="5">
    <location>
        <begin position="382"/>
        <end position="385"/>
    </location>
</feature>
<feature type="helix" evidence="5">
    <location>
        <begin position="393"/>
        <end position="410"/>
    </location>
</feature>
<keyword id="KW-0002">3D-structure</keyword>
<keyword id="KW-0032">Aminotransferase</keyword>
<keyword id="KW-0963">Cytoplasm</keyword>
<keyword id="KW-1015">Disulfide bond</keyword>
<keyword id="KW-0663">Pyridoxal phosphate</keyword>
<keyword id="KW-1185">Reference proteome</keyword>
<keyword id="KW-0808">Transferase</keyword>
<accession>Q7RT90</accession>
<sequence>MEFVKDLKTPEDYINNELKYGAHNYDPIPVVLKRAKGVFVYDVNDKRYYDFLSAYSSVNQGHCHPNILNAMINQAKNLTICSRAFFSVPLGICERYLTNLLGYDKVLMMNTGAEANETAYKLCRKWGYEVKKIPENMAKIVVCKNNFSGRTLGCISASTTKKCTSNFGPFAPQFSKVPYDDLEALEEELKDPNVCAFIVEPIQGEAGVIVPSDNYLQGVYDICKKYNVLFVADEVQTGLGRTGKLLCVHHYNVKPDVILLGKALSGGHYPISAVLANDDIMLVIKPGEHGSTYGGNPLAASICVEALNVLINEKLCENAEKLGGPFLENLKRELKDSKIVRDVRGKGLLCAIEFKNELVNVLDICLKLKENGLITRDVHDKTIRLTPPLCITKEQLDECTEIIVKTVKFFDERF</sequence>
<name>OAT_PLAYO</name>
<dbReference type="EC" id="2.6.1.13" evidence="2"/>
<dbReference type="EMBL" id="AABL01000033">
    <property type="protein sequence ID" value="EAA20544.1"/>
    <property type="molecule type" value="Genomic_DNA"/>
</dbReference>
<dbReference type="PDB" id="1Z7D">
    <property type="method" value="X-ray"/>
    <property type="resolution" value="2.10 A"/>
    <property type="chains" value="A/B/C/D/E/F=1-414"/>
</dbReference>
<dbReference type="PDBsum" id="1Z7D"/>
<dbReference type="SMR" id="Q7RT90"/>
<dbReference type="FunCoup" id="Q7RT90">
    <property type="interactions" value="153"/>
</dbReference>
<dbReference type="STRING" id="73239.Q7RT90"/>
<dbReference type="PaxDb" id="73239-Q7RT90"/>
<dbReference type="EnsemblProtists" id="EAA20544">
    <property type="protein sequence ID" value="EAA20544"/>
    <property type="gene ID" value="EAA20544"/>
</dbReference>
<dbReference type="KEGG" id="pyo:PY17X_0109000"/>
<dbReference type="VEuPathDB" id="PlasmoDB:Py17XNL_000104751"/>
<dbReference type="InParanoid" id="Q7RT90"/>
<dbReference type="UniPathway" id="UPA00098">
    <property type="reaction ID" value="UER00358"/>
</dbReference>
<dbReference type="EvolutionaryTrace" id="Q7RT90"/>
<dbReference type="Proteomes" id="UP000008553">
    <property type="component" value="Unassembled WGS sequence"/>
</dbReference>
<dbReference type="GO" id="GO:0005737">
    <property type="term" value="C:cytoplasm"/>
    <property type="evidence" value="ECO:0007669"/>
    <property type="project" value="UniProtKB-SubCell"/>
</dbReference>
<dbReference type="GO" id="GO:0042802">
    <property type="term" value="F:identical protein binding"/>
    <property type="evidence" value="ECO:0007669"/>
    <property type="project" value="TreeGrafter"/>
</dbReference>
<dbReference type="GO" id="GO:0004587">
    <property type="term" value="F:ornithine aminotransferase activity"/>
    <property type="evidence" value="ECO:0007669"/>
    <property type="project" value="UniProtKB-EC"/>
</dbReference>
<dbReference type="GO" id="GO:0030170">
    <property type="term" value="F:pyridoxal phosphate binding"/>
    <property type="evidence" value="ECO:0007669"/>
    <property type="project" value="InterPro"/>
</dbReference>
<dbReference type="GO" id="GO:0019544">
    <property type="term" value="P:arginine catabolic process to glutamate"/>
    <property type="evidence" value="ECO:0007669"/>
    <property type="project" value="TreeGrafter"/>
</dbReference>
<dbReference type="GO" id="GO:0010121">
    <property type="term" value="P:arginine catabolic process to proline via ornithine"/>
    <property type="evidence" value="ECO:0007669"/>
    <property type="project" value="TreeGrafter"/>
</dbReference>
<dbReference type="GO" id="GO:0055129">
    <property type="term" value="P:L-proline biosynthetic process"/>
    <property type="evidence" value="ECO:0007669"/>
    <property type="project" value="UniProtKB-UniPathway"/>
</dbReference>
<dbReference type="CDD" id="cd00610">
    <property type="entry name" value="OAT_like"/>
    <property type="match status" value="1"/>
</dbReference>
<dbReference type="FunFam" id="3.40.640.10:FF:000011">
    <property type="entry name" value="Ornithine aminotransferase"/>
    <property type="match status" value="1"/>
</dbReference>
<dbReference type="FunFam" id="3.90.1150.10:FF:000152">
    <property type="entry name" value="Ornithine aminotransferase"/>
    <property type="match status" value="1"/>
</dbReference>
<dbReference type="Gene3D" id="3.90.1150.10">
    <property type="entry name" value="Aspartate Aminotransferase, domain 1"/>
    <property type="match status" value="1"/>
</dbReference>
<dbReference type="Gene3D" id="3.40.640.10">
    <property type="entry name" value="Type I PLP-dependent aspartate aminotransferase-like (Major domain)"/>
    <property type="match status" value="1"/>
</dbReference>
<dbReference type="InterPro" id="IPR005814">
    <property type="entry name" value="Aminotrans_3"/>
</dbReference>
<dbReference type="InterPro" id="IPR049704">
    <property type="entry name" value="Aminotrans_3_PPA_site"/>
</dbReference>
<dbReference type="InterPro" id="IPR050103">
    <property type="entry name" value="Class-III_PLP-dep_AT"/>
</dbReference>
<dbReference type="InterPro" id="IPR010164">
    <property type="entry name" value="Orn_aminotrans"/>
</dbReference>
<dbReference type="InterPro" id="IPR015424">
    <property type="entry name" value="PyrdxlP-dep_Trfase"/>
</dbReference>
<dbReference type="InterPro" id="IPR015421">
    <property type="entry name" value="PyrdxlP-dep_Trfase_major"/>
</dbReference>
<dbReference type="InterPro" id="IPR015422">
    <property type="entry name" value="PyrdxlP-dep_Trfase_small"/>
</dbReference>
<dbReference type="NCBIfam" id="TIGR01885">
    <property type="entry name" value="Orn_aminotrans"/>
    <property type="match status" value="1"/>
</dbReference>
<dbReference type="PANTHER" id="PTHR11986">
    <property type="entry name" value="AMINOTRANSFERASE CLASS III"/>
    <property type="match status" value="1"/>
</dbReference>
<dbReference type="PANTHER" id="PTHR11986:SF18">
    <property type="entry name" value="ORNITHINE AMINOTRANSFERASE, MITOCHONDRIAL"/>
    <property type="match status" value="1"/>
</dbReference>
<dbReference type="Pfam" id="PF00202">
    <property type="entry name" value="Aminotran_3"/>
    <property type="match status" value="1"/>
</dbReference>
<dbReference type="PIRSF" id="PIRSF000521">
    <property type="entry name" value="Transaminase_4ab_Lys_Orn"/>
    <property type="match status" value="1"/>
</dbReference>
<dbReference type="SUPFAM" id="SSF53383">
    <property type="entry name" value="PLP-dependent transferases"/>
    <property type="match status" value="1"/>
</dbReference>
<dbReference type="PROSITE" id="PS00600">
    <property type="entry name" value="AA_TRANSFER_CLASS_3"/>
    <property type="match status" value="1"/>
</dbReference>
<comment type="function">
    <text evidence="2">Catalyzes the transamination of alpha-ketoglutarate with ornithine or N-acetylornithine and of glutamate-5-semialdehyde with glutamate and alanine.</text>
</comment>
<comment type="catalytic activity">
    <reaction evidence="2">
        <text>a 2-oxocarboxylate + L-ornithine = L-glutamate 5-semialdehyde + an L-alpha-amino acid</text>
        <dbReference type="Rhea" id="RHEA:13877"/>
        <dbReference type="ChEBI" id="CHEBI:35179"/>
        <dbReference type="ChEBI" id="CHEBI:46911"/>
        <dbReference type="ChEBI" id="CHEBI:58066"/>
        <dbReference type="ChEBI" id="CHEBI:59869"/>
        <dbReference type="EC" id="2.6.1.13"/>
    </reaction>
</comment>
<comment type="catalytic activity">
    <reaction evidence="2">
        <text>L-ornithine + 2-oxoglutarate = L-glutamate 5-semialdehyde + L-glutamate</text>
        <dbReference type="Rhea" id="RHEA:25160"/>
        <dbReference type="ChEBI" id="CHEBI:16810"/>
        <dbReference type="ChEBI" id="CHEBI:29985"/>
        <dbReference type="ChEBI" id="CHEBI:46911"/>
        <dbReference type="ChEBI" id="CHEBI:58066"/>
        <dbReference type="EC" id="2.6.1.13"/>
    </reaction>
    <physiologicalReaction direction="left-to-right" evidence="2">
        <dbReference type="Rhea" id="RHEA:25161"/>
    </physiologicalReaction>
</comment>
<comment type="cofactor">
    <cofactor evidence="1">
        <name>pyridoxal 5'-phosphate</name>
        <dbReference type="ChEBI" id="CHEBI:597326"/>
    </cofactor>
</comment>
<comment type="activity regulation">
    <text evidence="2">Unlike for mammalian OATs, activity is increased by TRX1-mediated reduction of the disulfide bond between Cys-154 and Cys-163. Binding to TRX1 may also induce conformational changes that facilitate substrate binding.</text>
</comment>
<comment type="pathway">
    <text evidence="1">Amino-acid biosynthesis; L-proline biosynthesis; L-glutamate 5-semialdehyde from L-ornithine: step 1/1.</text>
</comment>
<comment type="subunit">
    <text evidence="1">Homodimer.</text>
</comment>
<comment type="subcellular location">
    <subcellularLocation>
        <location evidence="3">Cytoplasm</location>
    </subcellularLocation>
</comment>
<comment type="PTM">
    <text evidence="2">The disulfide bond between Cys-154 and Cys-163 is reduced by TRX1 which increases OAT catalytic activity.</text>
</comment>
<comment type="similarity">
    <text evidence="3">Belongs to the class-III pyridoxal-phosphate-dependent aminotransferase family.</text>
</comment>
<protein>
    <recommendedName>
        <fullName evidence="2">Ornithine aminotransferase</fullName>
        <ecNumber evidence="2">2.6.1.13</ecNumber>
    </recommendedName>
    <alternativeName>
        <fullName evidence="3">Ornithine--oxo-acid aminotransferase</fullName>
    </alternativeName>
</protein>
<reference key="1">
    <citation type="journal article" date="2002" name="Nature">
        <title>Genome sequence and comparative analysis of the model rodent malaria parasite Plasmodium yoelii yoelii.</title>
        <authorList>
            <person name="Carlton J.M."/>
            <person name="Angiuoli S.V."/>
            <person name="Suh B.B."/>
            <person name="Kooij T.W."/>
            <person name="Pertea M."/>
            <person name="Silva J.C."/>
            <person name="Ermolaeva M.D."/>
            <person name="Allen J.E."/>
            <person name="Selengut J.D."/>
            <person name="Koo H.L."/>
            <person name="Peterson J.D."/>
            <person name="Pop M."/>
            <person name="Kosack D.S."/>
            <person name="Shumway M.F."/>
            <person name="Bidwell S.L."/>
            <person name="Shallom S.J."/>
            <person name="van Aken S.E."/>
            <person name="Riedmuller S.B."/>
            <person name="Feldblyum T.V."/>
            <person name="Cho J.K."/>
            <person name="Quackenbush J."/>
            <person name="Sedegah M."/>
            <person name="Shoaibi A."/>
            <person name="Cummings L.M."/>
            <person name="Florens L."/>
            <person name="Yates J.R. III"/>
            <person name="Raine J.D."/>
            <person name="Sinden R.E."/>
            <person name="Harris M.A."/>
            <person name="Cunningham D.A."/>
            <person name="Preiser P.R."/>
            <person name="Bergman L.W."/>
            <person name="Vaidya A.B."/>
            <person name="van Lin L.H."/>
            <person name="Janse C.J."/>
            <person name="Waters A.P."/>
            <person name="Smith H.O."/>
            <person name="White O.R."/>
            <person name="Salzberg S.L."/>
            <person name="Venter J.C."/>
            <person name="Fraser C.M."/>
            <person name="Hoffman S.L."/>
            <person name="Gardner M.J."/>
            <person name="Carucci D.J."/>
        </authorList>
    </citation>
    <scope>NUCLEOTIDE SEQUENCE [LARGE SCALE GENOMIC DNA]</scope>
    <source>
        <strain>17XNL</strain>
    </source>
</reference>
<reference evidence="4" key="2">
    <citation type="journal article" date="2007" name="Mol. Biochem. Parasitol.">
        <title>Genome-scale protein expression and structural biology of Plasmodium falciparum and related Apicomplexan organisms.</title>
        <authorList>
            <person name="Vedadi M."/>
            <person name="Lew J."/>
            <person name="Artz J."/>
            <person name="Amani M."/>
            <person name="Zhao Y."/>
            <person name="Dong A."/>
            <person name="Wasney G.A."/>
            <person name="Gao M."/>
            <person name="Hills T."/>
            <person name="Brokx S."/>
            <person name="Qiu W."/>
            <person name="Sharma S."/>
            <person name="Diassiti A."/>
            <person name="Alam Z."/>
            <person name="Melone M."/>
            <person name="Mulichak A."/>
            <person name="Wernimont A."/>
            <person name="Bray J."/>
            <person name="Loppnau P."/>
            <person name="Plotnikova O."/>
            <person name="Newberry K."/>
            <person name="Sundararajan E."/>
            <person name="Houston S."/>
            <person name="Walker J."/>
            <person name="Tempel W."/>
            <person name="Bochkarev A."/>
            <person name="Kozieradzki I."/>
            <person name="Edwards A."/>
            <person name="Arrowsmith C."/>
            <person name="Roos D."/>
            <person name="Kain K."/>
            <person name="Hui R."/>
        </authorList>
    </citation>
    <scope>X-RAY CRYSTALLOGRAPHY (2.10 ANGSTROMS)</scope>
</reference>
<gene>
    <name evidence="2" type="primary">OAT</name>
    <name type="ORF">PY00104</name>
</gene>